<sequence length="179" mass="19995">MQKAVVLDEQAIRRALTRIAHEIIERNKGIDDCVLIGIKTRGIYLAKRLAERIEQIEGKAVPVGELDITLYRDDLTVKTIDHEPLVKGTDVPFDVTNKKVILVDDVLFTGRTVRAAMDAVMDLGRPAQIQLAVLVDRGHRELPIRADFVGKNIPTSSSELIVVELTEVDQLDQVSIHEK</sequence>
<comment type="function">
    <text evidence="1">Regulates transcriptional attenuation of the pyrimidine nucleotide (pyr) operon by binding in a uridine-dependent manner to specific sites on pyr mRNA. This disrupts an antiterminator hairpin in the RNA and favors formation of a downstream transcription terminator, leading to a reduced expression of downstream genes.</text>
</comment>
<comment type="function">
    <text evidence="1">Also displays a weak uracil phosphoribosyltransferase activity which is not physiologically significant.</text>
</comment>
<comment type="catalytic activity">
    <reaction evidence="1">
        <text>UMP + diphosphate = 5-phospho-alpha-D-ribose 1-diphosphate + uracil</text>
        <dbReference type="Rhea" id="RHEA:13017"/>
        <dbReference type="ChEBI" id="CHEBI:17568"/>
        <dbReference type="ChEBI" id="CHEBI:33019"/>
        <dbReference type="ChEBI" id="CHEBI:57865"/>
        <dbReference type="ChEBI" id="CHEBI:58017"/>
        <dbReference type="EC" id="2.4.2.9"/>
    </reaction>
</comment>
<comment type="subunit">
    <text evidence="1">Homodimer and homohexamer; in equilibrium.</text>
</comment>
<comment type="similarity">
    <text evidence="1">Belongs to the purine/pyrimidine phosphoribosyltransferase family. PyrR subfamily.</text>
</comment>
<keyword id="KW-0328">Glycosyltransferase</keyword>
<keyword id="KW-0694">RNA-binding</keyword>
<keyword id="KW-0804">Transcription</keyword>
<keyword id="KW-0805">Transcription regulation</keyword>
<keyword id="KW-0806">Transcription termination</keyword>
<keyword id="KW-0808">Transferase</keyword>
<evidence type="ECO:0000255" key="1">
    <source>
        <dbReference type="HAMAP-Rule" id="MF_01219"/>
    </source>
</evidence>
<feature type="chain" id="PRO_1000213951" description="Bifunctional protein PyrR">
    <location>
        <begin position="1"/>
        <end position="179"/>
    </location>
</feature>
<feature type="short sequence motif" description="PRPP-binding" evidence="1">
    <location>
        <begin position="100"/>
        <end position="112"/>
    </location>
</feature>
<reference key="1">
    <citation type="submission" date="2009-06" db="EMBL/GenBank/DDBJ databases">
        <title>Complete sequence of chromosome of Geopacillus sp. WCH70.</title>
        <authorList>
            <consortium name="US DOE Joint Genome Institute"/>
            <person name="Lucas S."/>
            <person name="Copeland A."/>
            <person name="Lapidus A."/>
            <person name="Glavina del Rio T."/>
            <person name="Dalin E."/>
            <person name="Tice H."/>
            <person name="Bruce D."/>
            <person name="Goodwin L."/>
            <person name="Pitluck S."/>
            <person name="Chertkov O."/>
            <person name="Brettin T."/>
            <person name="Detter J.C."/>
            <person name="Han C."/>
            <person name="Larimer F."/>
            <person name="Land M."/>
            <person name="Hauser L."/>
            <person name="Kyrpides N."/>
            <person name="Mikhailova N."/>
            <person name="Brumm P."/>
            <person name="Mead D.A."/>
            <person name="Richardson P."/>
        </authorList>
    </citation>
    <scope>NUCLEOTIDE SEQUENCE [LARGE SCALE GENOMIC DNA]</scope>
    <source>
        <strain>WCH70</strain>
    </source>
</reference>
<gene>
    <name evidence="1" type="primary">pyrR</name>
    <name type="ordered locus">GWCH70_1042</name>
</gene>
<protein>
    <recommendedName>
        <fullName evidence="1">Bifunctional protein PyrR</fullName>
    </recommendedName>
    <domain>
        <recommendedName>
            <fullName evidence="1">Pyrimidine operon regulatory protein</fullName>
        </recommendedName>
    </domain>
    <domain>
        <recommendedName>
            <fullName evidence="1">Uracil phosphoribosyltransferase</fullName>
            <shortName evidence="1">UPRTase</shortName>
            <ecNumber evidence="1">2.4.2.9</ecNumber>
        </recommendedName>
    </domain>
</protein>
<organism>
    <name type="scientific">Geobacillus sp. (strain WCH70)</name>
    <dbReference type="NCBI Taxonomy" id="471223"/>
    <lineage>
        <taxon>Bacteria</taxon>
        <taxon>Bacillati</taxon>
        <taxon>Bacillota</taxon>
        <taxon>Bacilli</taxon>
        <taxon>Bacillales</taxon>
        <taxon>Anoxybacillaceae</taxon>
        <taxon>Geobacillus</taxon>
    </lineage>
</organism>
<name>PYRR_GEOSW</name>
<dbReference type="EC" id="2.4.2.9" evidence="1"/>
<dbReference type="EMBL" id="CP001638">
    <property type="protein sequence ID" value="ACS23902.1"/>
    <property type="molecule type" value="Genomic_DNA"/>
</dbReference>
<dbReference type="SMR" id="C5D8P5"/>
<dbReference type="STRING" id="471223.GWCH70_1042"/>
<dbReference type="KEGG" id="gwc:GWCH70_1042"/>
<dbReference type="eggNOG" id="COG2065">
    <property type="taxonomic scope" value="Bacteria"/>
</dbReference>
<dbReference type="HOGENOM" id="CLU_094234_2_1_9"/>
<dbReference type="OrthoDB" id="9802227at2"/>
<dbReference type="GO" id="GO:0003723">
    <property type="term" value="F:RNA binding"/>
    <property type="evidence" value="ECO:0007669"/>
    <property type="project" value="UniProtKB-UniRule"/>
</dbReference>
<dbReference type="GO" id="GO:0004845">
    <property type="term" value="F:uracil phosphoribosyltransferase activity"/>
    <property type="evidence" value="ECO:0007669"/>
    <property type="project" value="UniProtKB-UniRule"/>
</dbReference>
<dbReference type="GO" id="GO:0006353">
    <property type="term" value="P:DNA-templated transcription termination"/>
    <property type="evidence" value="ECO:0007669"/>
    <property type="project" value="UniProtKB-UniRule"/>
</dbReference>
<dbReference type="CDD" id="cd06223">
    <property type="entry name" value="PRTases_typeI"/>
    <property type="match status" value="1"/>
</dbReference>
<dbReference type="FunFam" id="3.40.50.2020:FF:000020">
    <property type="entry name" value="Bifunctional protein PyrR"/>
    <property type="match status" value="1"/>
</dbReference>
<dbReference type="Gene3D" id="3.40.50.2020">
    <property type="match status" value="1"/>
</dbReference>
<dbReference type="HAMAP" id="MF_01219">
    <property type="entry name" value="PyrR"/>
    <property type="match status" value="1"/>
</dbReference>
<dbReference type="InterPro" id="IPR000836">
    <property type="entry name" value="PRibTrfase_dom"/>
</dbReference>
<dbReference type="InterPro" id="IPR029057">
    <property type="entry name" value="PRTase-like"/>
</dbReference>
<dbReference type="InterPro" id="IPR023050">
    <property type="entry name" value="PyrR"/>
</dbReference>
<dbReference type="InterPro" id="IPR050137">
    <property type="entry name" value="PyrR_bifunctional"/>
</dbReference>
<dbReference type="NCBIfam" id="NF003545">
    <property type="entry name" value="PRK05205.1-1"/>
    <property type="match status" value="1"/>
</dbReference>
<dbReference type="NCBIfam" id="NF003547">
    <property type="entry name" value="PRK05205.1-3"/>
    <property type="match status" value="1"/>
</dbReference>
<dbReference type="NCBIfam" id="NF003548">
    <property type="entry name" value="PRK05205.1-4"/>
    <property type="match status" value="1"/>
</dbReference>
<dbReference type="NCBIfam" id="NF003549">
    <property type="entry name" value="PRK05205.1-5"/>
    <property type="match status" value="1"/>
</dbReference>
<dbReference type="PANTHER" id="PTHR11608">
    <property type="entry name" value="BIFUNCTIONAL PROTEIN PYRR"/>
    <property type="match status" value="1"/>
</dbReference>
<dbReference type="PANTHER" id="PTHR11608:SF0">
    <property type="entry name" value="BIFUNCTIONAL PROTEIN PYRR"/>
    <property type="match status" value="1"/>
</dbReference>
<dbReference type="Pfam" id="PF00156">
    <property type="entry name" value="Pribosyltran"/>
    <property type="match status" value="1"/>
</dbReference>
<dbReference type="SUPFAM" id="SSF53271">
    <property type="entry name" value="PRTase-like"/>
    <property type="match status" value="1"/>
</dbReference>
<proteinExistence type="inferred from homology"/>
<accession>C5D8P5</accession>